<feature type="chain" id="PRO_0000135829" description="Histidinol dehydrogenase">
    <location>
        <begin position="1"/>
        <end position="430"/>
    </location>
</feature>
<feature type="active site" description="Proton acceptor" evidence="1">
    <location>
        <position position="327"/>
    </location>
</feature>
<feature type="active site" description="Proton acceptor" evidence="1">
    <location>
        <position position="328"/>
    </location>
</feature>
<feature type="binding site" evidence="1">
    <location>
        <position position="237"/>
    </location>
    <ligand>
        <name>substrate</name>
    </ligand>
</feature>
<feature type="binding site" evidence="1">
    <location>
        <position position="259"/>
    </location>
    <ligand>
        <name>substrate</name>
    </ligand>
</feature>
<feature type="binding site" evidence="1">
    <location>
        <position position="259"/>
    </location>
    <ligand>
        <name>Zn(2+)</name>
        <dbReference type="ChEBI" id="CHEBI:29105"/>
    </ligand>
</feature>
<feature type="binding site" evidence="1">
    <location>
        <position position="262"/>
    </location>
    <ligand>
        <name>substrate</name>
    </ligand>
</feature>
<feature type="binding site" evidence="1">
    <location>
        <position position="262"/>
    </location>
    <ligand>
        <name>Zn(2+)</name>
        <dbReference type="ChEBI" id="CHEBI:29105"/>
    </ligand>
</feature>
<feature type="binding site" evidence="1">
    <location>
        <position position="328"/>
    </location>
    <ligand>
        <name>substrate</name>
    </ligand>
</feature>
<feature type="binding site" evidence="1">
    <location>
        <position position="361"/>
    </location>
    <ligand>
        <name>substrate</name>
    </ligand>
</feature>
<feature type="binding site" evidence="1">
    <location>
        <position position="361"/>
    </location>
    <ligand>
        <name>Zn(2+)</name>
        <dbReference type="ChEBI" id="CHEBI:29105"/>
    </ligand>
</feature>
<feature type="binding site" evidence="1">
    <location>
        <position position="415"/>
    </location>
    <ligand>
        <name>substrate</name>
    </ligand>
</feature>
<feature type="binding site" evidence="1">
    <location>
        <position position="420"/>
    </location>
    <ligand>
        <name>substrate</name>
    </ligand>
</feature>
<feature type="binding site" evidence="1">
    <location>
        <position position="420"/>
    </location>
    <ligand>
        <name>Zn(2+)</name>
        <dbReference type="ChEBI" id="CHEBI:29105"/>
    </ligand>
</feature>
<reference key="1">
    <citation type="journal article" date="2000" name="DNA Res.">
        <title>Complete genome structure of the nitrogen-fixing symbiotic bacterium Mesorhizobium loti.</title>
        <authorList>
            <person name="Kaneko T."/>
            <person name="Nakamura Y."/>
            <person name="Sato S."/>
            <person name="Asamizu E."/>
            <person name="Kato T."/>
            <person name="Sasamoto S."/>
            <person name="Watanabe A."/>
            <person name="Idesawa K."/>
            <person name="Ishikawa A."/>
            <person name="Kawashima K."/>
            <person name="Kimura T."/>
            <person name="Kishida Y."/>
            <person name="Kiyokawa C."/>
            <person name="Kohara M."/>
            <person name="Matsumoto M."/>
            <person name="Matsuno A."/>
            <person name="Mochizuki Y."/>
            <person name="Nakayama S."/>
            <person name="Nakazaki N."/>
            <person name="Shimpo S."/>
            <person name="Sugimoto M."/>
            <person name="Takeuchi C."/>
            <person name="Yamada M."/>
            <person name="Tabata S."/>
        </authorList>
    </citation>
    <scope>NUCLEOTIDE SEQUENCE [LARGE SCALE GENOMIC DNA]</scope>
    <source>
        <strain>LMG 29417 / CECT 9101 / MAFF 303099</strain>
    </source>
</reference>
<name>HISX_RHILO</name>
<dbReference type="EC" id="1.1.1.23" evidence="1"/>
<dbReference type="EMBL" id="BA000012">
    <property type="protein sequence ID" value="BAB52750.1"/>
    <property type="molecule type" value="Genomic_DNA"/>
</dbReference>
<dbReference type="RefSeq" id="WP_010914064.1">
    <property type="nucleotide sequence ID" value="NC_002678.2"/>
</dbReference>
<dbReference type="SMR" id="Q989E7"/>
<dbReference type="KEGG" id="mlo:mll6456"/>
<dbReference type="PATRIC" id="fig|266835.9.peg.5127"/>
<dbReference type="eggNOG" id="COG0141">
    <property type="taxonomic scope" value="Bacteria"/>
</dbReference>
<dbReference type="HOGENOM" id="CLU_006732_3_3_5"/>
<dbReference type="UniPathway" id="UPA00031">
    <property type="reaction ID" value="UER00014"/>
</dbReference>
<dbReference type="Proteomes" id="UP000000552">
    <property type="component" value="Chromosome"/>
</dbReference>
<dbReference type="GO" id="GO:0005829">
    <property type="term" value="C:cytosol"/>
    <property type="evidence" value="ECO:0007669"/>
    <property type="project" value="TreeGrafter"/>
</dbReference>
<dbReference type="GO" id="GO:0004399">
    <property type="term" value="F:histidinol dehydrogenase activity"/>
    <property type="evidence" value="ECO:0007669"/>
    <property type="project" value="UniProtKB-UniRule"/>
</dbReference>
<dbReference type="GO" id="GO:0051287">
    <property type="term" value="F:NAD binding"/>
    <property type="evidence" value="ECO:0007669"/>
    <property type="project" value="InterPro"/>
</dbReference>
<dbReference type="GO" id="GO:0008270">
    <property type="term" value="F:zinc ion binding"/>
    <property type="evidence" value="ECO:0007669"/>
    <property type="project" value="UniProtKB-UniRule"/>
</dbReference>
<dbReference type="GO" id="GO:0000105">
    <property type="term" value="P:L-histidine biosynthetic process"/>
    <property type="evidence" value="ECO:0007669"/>
    <property type="project" value="UniProtKB-UniRule"/>
</dbReference>
<dbReference type="CDD" id="cd06572">
    <property type="entry name" value="Histidinol_dh"/>
    <property type="match status" value="1"/>
</dbReference>
<dbReference type="FunFam" id="3.40.50.1980:FF:000001">
    <property type="entry name" value="Histidinol dehydrogenase"/>
    <property type="match status" value="1"/>
</dbReference>
<dbReference type="FunFam" id="3.40.50.1980:FF:000026">
    <property type="entry name" value="Histidinol dehydrogenase"/>
    <property type="match status" value="1"/>
</dbReference>
<dbReference type="FunFam" id="1.20.5.1300:FF:000002">
    <property type="entry name" value="Histidinol dehydrogenase, chloroplastic"/>
    <property type="match status" value="1"/>
</dbReference>
<dbReference type="Gene3D" id="1.20.5.1300">
    <property type="match status" value="1"/>
</dbReference>
<dbReference type="Gene3D" id="3.40.50.1980">
    <property type="entry name" value="Nitrogenase molybdenum iron protein domain"/>
    <property type="match status" value="2"/>
</dbReference>
<dbReference type="HAMAP" id="MF_01024">
    <property type="entry name" value="HisD"/>
    <property type="match status" value="1"/>
</dbReference>
<dbReference type="InterPro" id="IPR016161">
    <property type="entry name" value="Ald_DH/histidinol_DH"/>
</dbReference>
<dbReference type="InterPro" id="IPR001692">
    <property type="entry name" value="Histidinol_DH_CS"/>
</dbReference>
<dbReference type="InterPro" id="IPR022695">
    <property type="entry name" value="Histidinol_DH_monofunct"/>
</dbReference>
<dbReference type="InterPro" id="IPR012131">
    <property type="entry name" value="Hstdl_DH"/>
</dbReference>
<dbReference type="NCBIfam" id="TIGR00069">
    <property type="entry name" value="hisD"/>
    <property type="match status" value="1"/>
</dbReference>
<dbReference type="PANTHER" id="PTHR21256:SF2">
    <property type="entry name" value="HISTIDINE BIOSYNTHESIS TRIFUNCTIONAL PROTEIN"/>
    <property type="match status" value="1"/>
</dbReference>
<dbReference type="PANTHER" id="PTHR21256">
    <property type="entry name" value="HISTIDINOL DEHYDROGENASE HDH"/>
    <property type="match status" value="1"/>
</dbReference>
<dbReference type="Pfam" id="PF00815">
    <property type="entry name" value="Histidinol_dh"/>
    <property type="match status" value="1"/>
</dbReference>
<dbReference type="PIRSF" id="PIRSF000099">
    <property type="entry name" value="Histidinol_dh"/>
    <property type="match status" value="1"/>
</dbReference>
<dbReference type="PRINTS" id="PR00083">
    <property type="entry name" value="HOLDHDRGNASE"/>
</dbReference>
<dbReference type="SUPFAM" id="SSF53720">
    <property type="entry name" value="ALDH-like"/>
    <property type="match status" value="1"/>
</dbReference>
<dbReference type="PROSITE" id="PS00611">
    <property type="entry name" value="HISOL_DEHYDROGENASE"/>
    <property type="match status" value="1"/>
</dbReference>
<sequence>MAITLRQSDADFEQRFAAFLTTKREVSEDVDAGVRQIIARVRAEGDAALIDYTQRFDRADLKSLGIAVSKQDIAAAYETADPKAIEALEFARDRIRSHHERQRPKDDRYTDATGVELGWRWTAIEAVGLYVPGGTASYPSSVLMNAVPARVAGVERVVMVVPAPGGIINPLVLVAADISGVTEIYRVGGAHAIAALAYGTETIKPVAKIVGPGNAYVAAAKRQVFGTVGIDMIAGPSEVLVVADGSNNADWIAADLLAQAEHDVSAQSILITDDPAFGKAVEQAVERQLQTLPRGETAAASWRDFGAVIEVATIEAALPLVDRIAAEHVELAIDDAEGFLSRMRNAGAVFLGRHTPEAIGDYVGGSNHVLPTARSARFSSGLSVLDFVKRTSILKLGPEQLRVLAPAAIALAKAEGLDAHGRSVAIRLNM</sequence>
<keyword id="KW-0028">Amino-acid biosynthesis</keyword>
<keyword id="KW-0368">Histidine biosynthesis</keyword>
<keyword id="KW-0479">Metal-binding</keyword>
<keyword id="KW-0520">NAD</keyword>
<keyword id="KW-0560">Oxidoreductase</keyword>
<keyword id="KW-0862">Zinc</keyword>
<protein>
    <recommendedName>
        <fullName evidence="1">Histidinol dehydrogenase</fullName>
        <shortName evidence="1">HDH</shortName>
        <ecNumber evidence="1">1.1.1.23</ecNumber>
    </recommendedName>
</protein>
<comment type="function">
    <text evidence="1">Catalyzes the sequential NAD-dependent oxidations of L-histidinol to L-histidinaldehyde and then to L-histidine.</text>
</comment>
<comment type="catalytic activity">
    <reaction evidence="1">
        <text>L-histidinol + 2 NAD(+) + H2O = L-histidine + 2 NADH + 3 H(+)</text>
        <dbReference type="Rhea" id="RHEA:20641"/>
        <dbReference type="ChEBI" id="CHEBI:15377"/>
        <dbReference type="ChEBI" id="CHEBI:15378"/>
        <dbReference type="ChEBI" id="CHEBI:57540"/>
        <dbReference type="ChEBI" id="CHEBI:57595"/>
        <dbReference type="ChEBI" id="CHEBI:57699"/>
        <dbReference type="ChEBI" id="CHEBI:57945"/>
        <dbReference type="EC" id="1.1.1.23"/>
    </reaction>
</comment>
<comment type="cofactor">
    <cofactor evidence="1">
        <name>Zn(2+)</name>
        <dbReference type="ChEBI" id="CHEBI:29105"/>
    </cofactor>
    <text evidence="1">Binds 1 zinc ion per subunit.</text>
</comment>
<comment type="pathway">
    <text evidence="1">Amino-acid biosynthesis; L-histidine biosynthesis; L-histidine from 5-phospho-alpha-D-ribose 1-diphosphate: step 9/9.</text>
</comment>
<comment type="similarity">
    <text evidence="1">Belongs to the histidinol dehydrogenase family.</text>
</comment>
<accession>Q989E7</accession>
<organism>
    <name type="scientific">Mesorhizobium japonicum (strain LMG 29417 / CECT 9101 / MAFF 303099)</name>
    <name type="common">Mesorhizobium loti (strain MAFF 303099)</name>
    <dbReference type="NCBI Taxonomy" id="266835"/>
    <lineage>
        <taxon>Bacteria</taxon>
        <taxon>Pseudomonadati</taxon>
        <taxon>Pseudomonadota</taxon>
        <taxon>Alphaproteobacteria</taxon>
        <taxon>Hyphomicrobiales</taxon>
        <taxon>Phyllobacteriaceae</taxon>
        <taxon>Mesorhizobium</taxon>
    </lineage>
</organism>
<proteinExistence type="inferred from homology"/>
<gene>
    <name evidence="1" type="primary">hisD</name>
    <name type="ordered locus">mll6456</name>
</gene>
<evidence type="ECO:0000255" key="1">
    <source>
        <dbReference type="HAMAP-Rule" id="MF_01024"/>
    </source>
</evidence>